<keyword id="KW-0687">Ribonucleoprotein</keyword>
<keyword id="KW-0689">Ribosomal protein</keyword>
<name>RL30_LACLS</name>
<feature type="chain" id="PRO_0000273800" description="Large ribosomal subunit protein uL30">
    <location>
        <begin position="1"/>
        <end position="59"/>
    </location>
</feature>
<gene>
    <name evidence="1" type="primary">rpmD</name>
    <name type="ordered locus">LACR_2383</name>
</gene>
<evidence type="ECO:0000255" key="1">
    <source>
        <dbReference type="HAMAP-Rule" id="MF_01371"/>
    </source>
</evidence>
<evidence type="ECO:0000305" key="2"/>
<accession>Q02W43</accession>
<organism>
    <name type="scientific">Lactococcus lactis subsp. cremoris (strain SK11)</name>
    <dbReference type="NCBI Taxonomy" id="272622"/>
    <lineage>
        <taxon>Bacteria</taxon>
        <taxon>Bacillati</taxon>
        <taxon>Bacillota</taxon>
        <taxon>Bacilli</taxon>
        <taxon>Lactobacillales</taxon>
        <taxon>Streptococcaceae</taxon>
        <taxon>Lactococcus</taxon>
        <taxon>Lactococcus cremoris subsp. cremoris</taxon>
    </lineage>
</organism>
<protein>
    <recommendedName>
        <fullName evidence="1">Large ribosomal subunit protein uL30</fullName>
    </recommendedName>
    <alternativeName>
        <fullName evidence="2">50S ribosomal protein L30</fullName>
    </alternativeName>
</protein>
<comment type="subunit">
    <text evidence="1">Part of the 50S ribosomal subunit.</text>
</comment>
<comment type="similarity">
    <text evidence="1">Belongs to the universal ribosomal protein uL30 family.</text>
</comment>
<sequence>MAQIKITLVNSPIGRIPAQRKTVKALGLGKLNSSVVKEGSPAILGMVNSISHLVKVEEA</sequence>
<reference key="1">
    <citation type="journal article" date="2006" name="Proc. Natl. Acad. Sci. U.S.A.">
        <title>Comparative genomics of the lactic acid bacteria.</title>
        <authorList>
            <person name="Makarova K.S."/>
            <person name="Slesarev A."/>
            <person name="Wolf Y.I."/>
            <person name="Sorokin A."/>
            <person name="Mirkin B."/>
            <person name="Koonin E.V."/>
            <person name="Pavlov A."/>
            <person name="Pavlova N."/>
            <person name="Karamychev V."/>
            <person name="Polouchine N."/>
            <person name="Shakhova V."/>
            <person name="Grigoriev I."/>
            <person name="Lou Y."/>
            <person name="Rohksar D."/>
            <person name="Lucas S."/>
            <person name="Huang K."/>
            <person name="Goodstein D.M."/>
            <person name="Hawkins T."/>
            <person name="Plengvidhya V."/>
            <person name="Welker D."/>
            <person name="Hughes J."/>
            <person name="Goh Y."/>
            <person name="Benson A."/>
            <person name="Baldwin K."/>
            <person name="Lee J.-H."/>
            <person name="Diaz-Muniz I."/>
            <person name="Dosti B."/>
            <person name="Smeianov V."/>
            <person name="Wechter W."/>
            <person name="Barabote R."/>
            <person name="Lorca G."/>
            <person name="Altermann E."/>
            <person name="Barrangou R."/>
            <person name="Ganesan B."/>
            <person name="Xie Y."/>
            <person name="Rawsthorne H."/>
            <person name="Tamir D."/>
            <person name="Parker C."/>
            <person name="Breidt F."/>
            <person name="Broadbent J.R."/>
            <person name="Hutkins R."/>
            <person name="O'Sullivan D."/>
            <person name="Steele J."/>
            <person name="Unlu G."/>
            <person name="Saier M.H. Jr."/>
            <person name="Klaenhammer T."/>
            <person name="Richardson P."/>
            <person name="Kozyavkin S."/>
            <person name="Weimer B.C."/>
            <person name="Mills D.A."/>
        </authorList>
    </citation>
    <scope>NUCLEOTIDE SEQUENCE [LARGE SCALE GENOMIC DNA]</scope>
    <source>
        <strain>SK11</strain>
    </source>
</reference>
<dbReference type="EMBL" id="CP000425">
    <property type="protein sequence ID" value="ABJ73829.1"/>
    <property type="molecule type" value="Genomic_DNA"/>
</dbReference>
<dbReference type="RefSeq" id="WP_003129921.1">
    <property type="nucleotide sequence ID" value="NC_008527.1"/>
</dbReference>
<dbReference type="SMR" id="Q02W43"/>
<dbReference type="GeneID" id="89634428"/>
<dbReference type="KEGG" id="llc:LACR_2383"/>
<dbReference type="HOGENOM" id="CLU_131047_2_1_9"/>
<dbReference type="Proteomes" id="UP000000240">
    <property type="component" value="Chromosome"/>
</dbReference>
<dbReference type="GO" id="GO:0022625">
    <property type="term" value="C:cytosolic large ribosomal subunit"/>
    <property type="evidence" value="ECO:0007669"/>
    <property type="project" value="TreeGrafter"/>
</dbReference>
<dbReference type="GO" id="GO:0003735">
    <property type="term" value="F:structural constituent of ribosome"/>
    <property type="evidence" value="ECO:0007669"/>
    <property type="project" value="InterPro"/>
</dbReference>
<dbReference type="GO" id="GO:0006412">
    <property type="term" value="P:translation"/>
    <property type="evidence" value="ECO:0007669"/>
    <property type="project" value="UniProtKB-UniRule"/>
</dbReference>
<dbReference type="CDD" id="cd01658">
    <property type="entry name" value="Ribosomal_L30"/>
    <property type="match status" value="1"/>
</dbReference>
<dbReference type="FunFam" id="3.30.1390.20:FF:000001">
    <property type="entry name" value="50S ribosomal protein L30"/>
    <property type="match status" value="1"/>
</dbReference>
<dbReference type="Gene3D" id="3.30.1390.20">
    <property type="entry name" value="Ribosomal protein L30, ferredoxin-like fold domain"/>
    <property type="match status" value="1"/>
</dbReference>
<dbReference type="HAMAP" id="MF_01371_B">
    <property type="entry name" value="Ribosomal_uL30_B"/>
    <property type="match status" value="1"/>
</dbReference>
<dbReference type="InterPro" id="IPR036919">
    <property type="entry name" value="Ribo_uL30_ferredoxin-like_sf"/>
</dbReference>
<dbReference type="InterPro" id="IPR005996">
    <property type="entry name" value="Ribosomal_uL30_bac-type"/>
</dbReference>
<dbReference type="InterPro" id="IPR018038">
    <property type="entry name" value="Ribosomal_uL30_CS"/>
</dbReference>
<dbReference type="InterPro" id="IPR016082">
    <property type="entry name" value="Ribosomal_uL30_ferredoxin-like"/>
</dbReference>
<dbReference type="NCBIfam" id="TIGR01308">
    <property type="entry name" value="rpmD_bact"/>
    <property type="match status" value="1"/>
</dbReference>
<dbReference type="PANTHER" id="PTHR15892:SF2">
    <property type="entry name" value="LARGE RIBOSOMAL SUBUNIT PROTEIN UL30M"/>
    <property type="match status" value="1"/>
</dbReference>
<dbReference type="PANTHER" id="PTHR15892">
    <property type="entry name" value="MITOCHONDRIAL RIBOSOMAL PROTEIN L30"/>
    <property type="match status" value="1"/>
</dbReference>
<dbReference type="Pfam" id="PF00327">
    <property type="entry name" value="Ribosomal_L30"/>
    <property type="match status" value="1"/>
</dbReference>
<dbReference type="PIRSF" id="PIRSF002211">
    <property type="entry name" value="Ribosomal_L30_bac-type"/>
    <property type="match status" value="1"/>
</dbReference>
<dbReference type="SUPFAM" id="SSF55129">
    <property type="entry name" value="Ribosomal protein L30p/L7e"/>
    <property type="match status" value="1"/>
</dbReference>
<dbReference type="PROSITE" id="PS00634">
    <property type="entry name" value="RIBOSOMAL_L30"/>
    <property type="match status" value="1"/>
</dbReference>
<proteinExistence type="inferred from homology"/>